<dbReference type="EC" id="5.2.1.8"/>
<dbReference type="EMBL" id="AC006201">
    <property type="protein sequence ID" value="AAD20122.1"/>
    <property type="molecule type" value="Genomic_DNA"/>
</dbReference>
<dbReference type="EMBL" id="CP002685">
    <property type="protein sequence ID" value="AEC06719.1"/>
    <property type="molecule type" value="Genomic_DNA"/>
</dbReference>
<dbReference type="EMBL" id="AF360318">
    <property type="protein sequence ID" value="AAK26028.1"/>
    <property type="molecule type" value="mRNA"/>
</dbReference>
<dbReference type="EMBL" id="AY057514">
    <property type="protein sequence ID" value="AAL09755.1"/>
    <property type="molecule type" value="mRNA"/>
</dbReference>
<dbReference type="EMBL" id="AY056314">
    <property type="protein sequence ID" value="AAL07163.1"/>
    <property type="molecule type" value="mRNA"/>
</dbReference>
<dbReference type="EMBL" id="AY085059">
    <property type="protein sequence ID" value="AAM61615.1"/>
    <property type="molecule type" value="mRNA"/>
</dbReference>
<dbReference type="EMBL" id="F13919">
    <property type="protein sequence ID" value="CAA23077.1"/>
    <property type="molecule type" value="mRNA"/>
</dbReference>
<dbReference type="PIR" id="E84559">
    <property type="entry name" value="E84559"/>
</dbReference>
<dbReference type="PDB" id="1J6Y">
    <property type="method" value="NMR"/>
    <property type="chains" value="A=1-119"/>
</dbReference>
<dbReference type="PDBsum" id="1J6Y"/>
<dbReference type="BMRB" id="Q9SL42"/>
<dbReference type="SMR" id="Q9SL42"/>
<dbReference type="FunCoup" id="Q9SL42">
    <property type="interactions" value="3872"/>
</dbReference>
<dbReference type="IntAct" id="Q9SL42">
    <property type="interactions" value="2"/>
</dbReference>
<dbReference type="STRING" id="3702.Q9SL42"/>
<dbReference type="iPTMnet" id="Q9SL42"/>
<dbReference type="PaxDb" id="3702-AT2G18040.1"/>
<dbReference type="ProteomicsDB" id="235022"/>
<dbReference type="EnsemblPlants" id="AT2G18040.1">
    <property type="protein sequence ID" value="AT2G18040.1"/>
    <property type="gene ID" value="AT2G18040"/>
</dbReference>
<dbReference type="GeneID" id="816316"/>
<dbReference type="Gramene" id="AT2G18040.1">
    <property type="protein sequence ID" value="AT2G18040.1"/>
    <property type="gene ID" value="AT2G18040"/>
</dbReference>
<dbReference type="KEGG" id="ath:AT2G18040"/>
<dbReference type="Araport" id="AT2G18040"/>
<dbReference type="TAIR" id="AT2G18040">
    <property type="gene designation" value="PIN1AT"/>
</dbReference>
<dbReference type="eggNOG" id="KOG3259">
    <property type="taxonomic scope" value="Eukaryota"/>
</dbReference>
<dbReference type="HOGENOM" id="CLU_090028_4_0_1"/>
<dbReference type="InParanoid" id="Q9SL42"/>
<dbReference type="OMA" id="DEVQCLH"/>
<dbReference type="OrthoDB" id="2530521at2759"/>
<dbReference type="PhylomeDB" id="Q9SL42"/>
<dbReference type="CD-CODE" id="4299E36E">
    <property type="entry name" value="Nucleolus"/>
</dbReference>
<dbReference type="EvolutionaryTrace" id="Q9SL42"/>
<dbReference type="PRO" id="PR:Q9SL42"/>
<dbReference type="Proteomes" id="UP000006548">
    <property type="component" value="Chromosome 2"/>
</dbReference>
<dbReference type="ExpressionAtlas" id="Q9SL42">
    <property type="expression patterns" value="baseline and differential"/>
</dbReference>
<dbReference type="GO" id="GO:0005829">
    <property type="term" value="C:cytosol"/>
    <property type="evidence" value="ECO:0007005"/>
    <property type="project" value="TAIR"/>
</dbReference>
<dbReference type="GO" id="GO:0005783">
    <property type="term" value="C:endoplasmic reticulum"/>
    <property type="evidence" value="ECO:0007005"/>
    <property type="project" value="TAIR"/>
</dbReference>
<dbReference type="GO" id="GO:0005739">
    <property type="term" value="C:mitochondrion"/>
    <property type="evidence" value="ECO:0007005"/>
    <property type="project" value="TAIR"/>
</dbReference>
<dbReference type="GO" id="GO:0009506">
    <property type="term" value="C:plasmodesma"/>
    <property type="evidence" value="ECO:0007005"/>
    <property type="project" value="TAIR"/>
</dbReference>
<dbReference type="GO" id="GO:0003755">
    <property type="term" value="F:peptidyl-prolyl cis-trans isomerase activity"/>
    <property type="evidence" value="ECO:0000314"/>
    <property type="project" value="TAIR"/>
</dbReference>
<dbReference type="GO" id="GO:0009630">
    <property type="term" value="P:gravitropism"/>
    <property type="evidence" value="ECO:0000315"/>
    <property type="project" value="TAIR"/>
</dbReference>
<dbReference type="GO" id="GO:0051726">
    <property type="term" value="P:regulation of cell cycle"/>
    <property type="evidence" value="ECO:0000304"/>
    <property type="project" value="TAIR"/>
</dbReference>
<dbReference type="GO" id="GO:0009909">
    <property type="term" value="P:regulation of flower development"/>
    <property type="evidence" value="ECO:0000315"/>
    <property type="project" value="TAIR"/>
</dbReference>
<dbReference type="GO" id="GO:0032880">
    <property type="term" value="P:regulation of protein localization"/>
    <property type="evidence" value="ECO:0000315"/>
    <property type="project" value="TAIR"/>
</dbReference>
<dbReference type="FunFam" id="3.10.50.40:FF:000010">
    <property type="entry name" value="Peptidyl-prolyl cis-trans isomerase Pin1"/>
    <property type="match status" value="1"/>
</dbReference>
<dbReference type="Gene3D" id="3.10.50.40">
    <property type="match status" value="1"/>
</dbReference>
<dbReference type="InterPro" id="IPR046357">
    <property type="entry name" value="PPIase_dom_sf"/>
</dbReference>
<dbReference type="InterPro" id="IPR051370">
    <property type="entry name" value="PPIase_Pin1"/>
</dbReference>
<dbReference type="InterPro" id="IPR000297">
    <property type="entry name" value="PPIase_PpiC"/>
</dbReference>
<dbReference type="InterPro" id="IPR023058">
    <property type="entry name" value="PPIase_PpiC_CS"/>
</dbReference>
<dbReference type="PANTHER" id="PTHR10657">
    <property type="entry name" value="PEPTIDYL-PROLYL CIS-TRANS ISOMERASE"/>
    <property type="match status" value="1"/>
</dbReference>
<dbReference type="PANTHER" id="PTHR10657:SF41">
    <property type="entry name" value="PEPTIDYL-PROLYL CIS-TRANS ISOMERASE PIN1"/>
    <property type="match status" value="1"/>
</dbReference>
<dbReference type="Pfam" id="PF00639">
    <property type="entry name" value="Rotamase"/>
    <property type="match status" value="1"/>
</dbReference>
<dbReference type="SUPFAM" id="SSF54534">
    <property type="entry name" value="FKBP-like"/>
    <property type="match status" value="1"/>
</dbReference>
<dbReference type="PROSITE" id="PS01096">
    <property type="entry name" value="PPIC_PPIASE_1"/>
    <property type="match status" value="1"/>
</dbReference>
<dbReference type="PROSITE" id="PS50198">
    <property type="entry name" value="PPIC_PPIASE_2"/>
    <property type="match status" value="1"/>
</dbReference>
<organism>
    <name type="scientific">Arabidopsis thaliana</name>
    <name type="common">Mouse-ear cress</name>
    <dbReference type="NCBI Taxonomy" id="3702"/>
    <lineage>
        <taxon>Eukaryota</taxon>
        <taxon>Viridiplantae</taxon>
        <taxon>Streptophyta</taxon>
        <taxon>Embryophyta</taxon>
        <taxon>Tracheophyta</taxon>
        <taxon>Spermatophyta</taxon>
        <taxon>Magnoliopsida</taxon>
        <taxon>eudicotyledons</taxon>
        <taxon>Gunneridae</taxon>
        <taxon>Pentapetalae</taxon>
        <taxon>rosids</taxon>
        <taxon>malvids</taxon>
        <taxon>Brassicales</taxon>
        <taxon>Brassicaceae</taxon>
        <taxon>Camelineae</taxon>
        <taxon>Arabidopsis</taxon>
    </lineage>
</organism>
<reference key="1">
    <citation type="journal article" date="2000" name="J. Biol. Chem.">
        <title>The Arabidopsis thaliana PIN1At gene encodes a single-domain phosphorylation-dependent peptidyl prolyl cis/trans isomerase.</title>
        <authorList>
            <person name="Landrieu I."/>
            <person name="de Veylder L."/>
            <person name="Fruchart J.-S."/>
            <person name="Odaert B."/>
            <person name="Casteels P."/>
            <person name="Portetelle D."/>
            <person name="Van Montagu M."/>
            <person name="Inze D."/>
            <person name="Lippens G."/>
        </authorList>
    </citation>
    <scope>NUCLEOTIDE SEQUENCE [MRNA]</scope>
    <scope>FUNCTION</scope>
    <scope>TISSUE SPECIFICITY</scope>
</reference>
<reference key="2">
    <citation type="journal article" date="1999" name="Nature">
        <title>Sequence and analysis of chromosome 2 of the plant Arabidopsis thaliana.</title>
        <authorList>
            <person name="Lin X."/>
            <person name="Kaul S."/>
            <person name="Rounsley S.D."/>
            <person name="Shea T.P."/>
            <person name="Benito M.-I."/>
            <person name="Town C.D."/>
            <person name="Fujii C.Y."/>
            <person name="Mason T.M."/>
            <person name="Bowman C.L."/>
            <person name="Barnstead M.E."/>
            <person name="Feldblyum T.V."/>
            <person name="Buell C.R."/>
            <person name="Ketchum K.A."/>
            <person name="Lee J.J."/>
            <person name="Ronning C.M."/>
            <person name="Koo H.L."/>
            <person name="Moffat K.S."/>
            <person name="Cronin L.A."/>
            <person name="Shen M."/>
            <person name="Pai G."/>
            <person name="Van Aken S."/>
            <person name="Umayam L."/>
            <person name="Tallon L.J."/>
            <person name="Gill J.E."/>
            <person name="Adams M.D."/>
            <person name="Carrera A.J."/>
            <person name="Creasy T.H."/>
            <person name="Goodman H.M."/>
            <person name="Somerville C.R."/>
            <person name="Copenhaver G.P."/>
            <person name="Preuss D."/>
            <person name="Nierman W.C."/>
            <person name="White O."/>
            <person name="Eisen J.A."/>
            <person name="Salzberg S.L."/>
            <person name="Fraser C.M."/>
            <person name="Venter J.C."/>
        </authorList>
    </citation>
    <scope>NUCLEOTIDE SEQUENCE [LARGE SCALE GENOMIC DNA]</scope>
    <source>
        <strain>cv. Columbia</strain>
    </source>
</reference>
<reference key="3">
    <citation type="journal article" date="2017" name="Plant J.">
        <title>Araport11: a complete reannotation of the Arabidopsis thaliana reference genome.</title>
        <authorList>
            <person name="Cheng C.Y."/>
            <person name="Krishnakumar V."/>
            <person name="Chan A.P."/>
            <person name="Thibaud-Nissen F."/>
            <person name="Schobel S."/>
            <person name="Town C.D."/>
        </authorList>
    </citation>
    <scope>GENOME REANNOTATION</scope>
    <source>
        <strain>cv. Columbia</strain>
    </source>
</reference>
<reference key="4">
    <citation type="journal article" date="2003" name="Science">
        <title>Empirical analysis of transcriptional activity in the Arabidopsis genome.</title>
        <authorList>
            <person name="Yamada K."/>
            <person name="Lim J."/>
            <person name="Dale J.M."/>
            <person name="Chen H."/>
            <person name="Shinn P."/>
            <person name="Palm C.J."/>
            <person name="Southwick A.M."/>
            <person name="Wu H.C."/>
            <person name="Kim C.J."/>
            <person name="Nguyen M."/>
            <person name="Pham P.K."/>
            <person name="Cheuk R.F."/>
            <person name="Karlin-Newmann G."/>
            <person name="Liu S.X."/>
            <person name="Lam B."/>
            <person name="Sakano H."/>
            <person name="Wu T."/>
            <person name="Yu G."/>
            <person name="Miranda M."/>
            <person name="Quach H.L."/>
            <person name="Tripp M."/>
            <person name="Chang C.H."/>
            <person name="Lee J.M."/>
            <person name="Toriumi M.J."/>
            <person name="Chan M.M."/>
            <person name="Tang C.C."/>
            <person name="Onodera C.S."/>
            <person name="Deng J.M."/>
            <person name="Akiyama K."/>
            <person name="Ansari Y."/>
            <person name="Arakawa T."/>
            <person name="Banh J."/>
            <person name="Banno F."/>
            <person name="Bowser L."/>
            <person name="Brooks S.Y."/>
            <person name="Carninci P."/>
            <person name="Chao Q."/>
            <person name="Choy N."/>
            <person name="Enju A."/>
            <person name="Goldsmith A.D."/>
            <person name="Gurjal M."/>
            <person name="Hansen N.F."/>
            <person name="Hayashizaki Y."/>
            <person name="Johnson-Hopson C."/>
            <person name="Hsuan V.W."/>
            <person name="Iida K."/>
            <person name="Karnes M."/>
            <person name="Khan S."/>
            <person name="Koesema E."/>
            <person name="Ishida J."/>
            <person name="Jiang P.X."/>
            <person name="Jones T."/>
            <person name="Kawai J."/>
            <person name="Kamiya A."/>
            <person name="Meyers C."/>
            <person name="Nakajima M."/>
            <person name="Narusaka M."/>
            <person name="Seki M."/>
            <person name="Sakurai T."/>
            <person name="Satou M."/>
            <person name="Tamse R."/>
            <person name="Vaysberg M."/>
            <person name="Wallender E.K."/>
            <person name="Wong C."/>
            <person name="Yamamura Y."/>
            <person name="Yuan S."/>
            <person name="Shinozaki K."/>
            <person name="Davis R.W."/>
            <person name="Theologis A."/>
            <person name="Ecker J.R."/>
        </authorList>
    </citation>
    <scope>NUCLEOTIDE SEQUENCE [LARGE SCALE MRNA]</scope>
    <source>
        <strain>cv. Columbia</strain>
    </source>
</reference>
<reference key="5">
    <citation type="submission" date="2002-03" db="EMBL/GenBank/DDBJ databases">
        <title>Full-length cDNA from Arabidopsis thaliana.</title>
        <authorList>
            <person name="Brover V.V."/>
            <person name="Troukhan M.E."/>
            <person name="Alexandrov N.A."/>
            <person name="Lu Y.-P."/>
            <person name="Flavell R.B."/>
            <person name="Feldmann K.A."/>
        </authorList>
    </citation>
    <scope>NUCLEOTIDE SEQUENCE [LARGE SCALE MRNA]</scope>
</reference>
<reference key="6">
    <citation type="journal article" date="1996" name="Plant J.">
        <title>Further progress towards a catalogue of all Arabidopsis genes: analysis of a set of 5000 non-redundant ESTs.</title>
        <authorList>
            <person name="Cooke R."/>
            <person name="Raynal M."/>
            <person name="Laudie M."/>
            <person name="Grellet F."/>
            <person name="Delseny M."/>
            <person name="Morris P.-C."/>
            <person name="Guerrier D."/>
            <person name="Giraudat J."/>
            <person name="Quigley F."/>
            <person name="Clabault G."/>
            <person name="Li Y.-F."/>
            <person name="Mache R."/>
            <person name="Krivitzky M."/>
            <person name="Gy I.J.-J."/>
            <person name="Kreis M."/>
            <person name="Lecharny A."/>
            <person name="Parmentier Y."/>
            <person name="Marbach J."/>
            <person name="Fleck J."/>
            <person name="Clement B."/>
            <person name="Philipps G."/>
            <person name="Herve C."/>
            <person name="Bardet C."/>
            <person name="Tremousaygue D."/>
            <person name="Lescure B."/>
            <person name="Lacomme C."/>
            <person name="Roby D."/>
            <person name="Jourjon M.-F."/>
            <person name="Chabrier P."/>
            <person name="Charpenteau J.-L."/>
            <person name="Desprez T."/>
            <person name="Amselem J."/>
            <person name="Chiapello H."/>
            <person name="Hoefte H."/>
        </authorList>
    </citation>
    <scope>NUCLEOTIDE SEQUENCE [LARGE SCALE MRNA] OF 51-119</scope>
    <source>
        <strain>cv. Columbia</strain>
        <tissue>Dry seed</tissue>
    </source>
</reference>
<reference key="7">
    <citation type="journal article" date="2012" name="J. Proteome Res.">
        <title>Identification of phosphoproteins in Arabidopsis thaliana leaves using polyethylene glycol fractionation, immobilized metal-ion affinity chromatography, two-dimensional gel electrophoresis and mass spectrometry.</title>
        <authorList>
            <person name="Aryal U.K."/>
            <person name="Krochko J.E."/>
            <person name="Ross A.R."/>
        </authorList>
    </citation>
    <scope>PHOSPHORYLATION [LARGE SCALE ANALYSIS] AT SER-103</scope>
    <scope>IDENTIFICATION BY MASS SPECTROMETRY [LARGE SCALE ANALYSIS]</scope>
</reference>
<reference key="8">
    <citation type="journal article" date="2000" name="J. Biomol. NMR">
        <title>Sequence-specific 1H, 13C and 15N chemical shift backbone NMR assignment and secondary structure of the Arabidopsis thaliana PIN1At protein.</title>
        <authorList>
            <person name="Landrieu I."/>
            <person name="Wieruszeski J.-M."/>
            <person name="Odaert B."/>
            <person name="Inze D."/>
            <person name="Grzesiek S."/>
            <person name="Lippen G."/>
        </authorList>
    </citation>
    <scope>STRUCTURE BY NMR OF 1-18 AND 36-119</scope>
</reference>
<reference key="9">
    <citation type="journal article" date="2002" name="J. Mol. Biol.">
        <title>Solution structure of the single-domain prolyl cis/trans isomerase PIN1At from Arabidopsis thaliana.</title>
        <authorList>
            <person name="Landrieu I."/>
            <person name="Wieruszeski J.-M."/>
            <person name="Wintjens R."/>
            <person name="Inze D."/>
            <person name="Lippens G."/>
        </authorList>
    </citation>
    <scope>STRUCTURE BY NMR</scope>
</reference>
<keyword id="KW-0002">3D-structure</keyword>
<keyword id="KW-0413">Isomerase</keyword>
<keyword id="KW-0597">Phosphoprotein</keyword>
<keyword id="KW-1185">Reference proteome</keyword>
<keyword id="KW-0697">Rotamase</keyword>
<accession>Q9SL42</accession>
<accession>Q42334</accession>
<sequence>MASRDQVKASHILIKHQGSRRKASWKDPEGKIILTTTREAAVEQLKSIREDIVSGKANFEEVATRVSDCSSAKRGGDLGSFGRGQMQKPFEEATYALKVGDISDIVDTDSGVHIIKRTA</sequence>
<gene>
    <name type="primary">PIN1</name>
    <name type="ordered locus">At2g18040</name>
    <name type="ORF">T27K22.9</name>
</gene>
<feature type="chain" id="PRO_0000193440" description="Peptidyl-prolyl cis-trans isomerase Pin1">
    <location>
        <begin position="1"/>
        <end position="119"/>
    </location>
</feature>
<feature type="domain" description="PpiC" evidence="1">
    <location>
        <begin position="4"/>
        <end position="119"/>
    </location>
</feature>
<feature type="modified residue" description="Phosphoserine" evidence="4">
    <location>
        <position position="103"/>
    </location>
</feature>
<feature type="strand" evidence="5">
    <location>
        <begin position="8"/>
        <end position="10"/>
    </location>
</feature>
<feature type="strand" evidence="5">
    <location>
        <begin position="20"/>
        <end position="24"/>
    </location>
</feature>
<feature type="helix" evidence="5">
    <location>
        <begin position="38"/>
        <end position="53"/>
    </location>
</feature>
<feature type="helix" evidence="5">
    <location>
        <begin position="60"/>
        <end position="65"/>
    </location>
</feature>
<feature type="helix" evidence="5">
    <location>
        <begin position="69"/>
        <end position="73"/>
    </location>
</feature>
<feature type="strand" evidence="5">
    <location>
        <begin position="76"/>
        <end position="80"/>
    </location>
</feature>
<feature type="strand" evidence="5">
    <location>
        <begin position="82"/>
        <end position="86"/>
    </location>
</feature>
<feature type="helix" evidence="5">
    <location>
        <begin position="89"/>
        <end position="96"/>
    </location>
</feature>
<feature type="strand" evidence="5">
    <location>
        <begin position="99"/>
        <end position="101"/>
    </location>
</feature>
<feature type="strand" evidence="5">
    <location>
        <begin position="106"/>
        <end position="108"/>
    </location>
</feature>
<feature type="strand" evidence="5">
    <location>
        <begin position="111"/>
        <end position="113"/>
    </location>
</feature>
<proteinExistence type="evidence at protein level"/>
<evidence type="ECO:0000255" key="1">
    <source>
        <dbReference type="PROSITE-ProRule" id="PRU00278"/>
    </source>
</evidence>
<evidence type="ECO:0000269" key="2">
    <source>
    </source>
</evidence>
<evidence type="ECO:0000305" key="3"/>
<evidence type="ECO:0007744" key="4">
    <source>
    </source>
</evidence>
<evidence type="ECO:0007829" key="5">
    <source>
        <dbReference type="PDB" id="1J6Y"/>
    </source>
</evidence>
<comment type="function">
    <text evidence="2">Prolyl cis/trans isomerase with specificity for phospho-Ser-Pro bonds.</text>
</comment>
<comment type="catalytic activity">
    <reaction>
        <text>[protein]-peptidylproline (omega=180) = [protein]-peptidylproline (omega=0)</text>
        <dbReference type="Rhea" id="RHEA:16237"/>
        <dbReference type="Rhea" id="RHEA-COMP:10747"/>
        <dbReference type="Rhea" id="RHEA-COMP:10748"/>
        <dbReference type="ChEBI" id="CHEBI:83833"/>
        <dbReference type="ChEBI" id="CHEBI:83834"/>
        <dbReference type="EC" id="5.2.1.8"/>
    </reaction>
</comment>
<comment type="interaction">
    <interactant intactId="EBI-2618990">
        <id>Q9SL42</id>
    </interactant>
    <interactant intactId="EBI-592083">
        <id>O82794</id>
        <label>AGL24</label>
    </interactant>
    <organismsDiffer>false</organismsDiffer>
    <experiments>4</experiments>
</comment>
<comment type="interaction">
    <interactant intactId="EBI-2618990">
        <id>Q9SL42</id>
    </interactant>
    <interactant intactId="EBI-592041">
        <id>O64645</id>
        <label>SOC1</label>
    </interactant>
    <organismsDiffer>false</organismsDiffer>
    <experiments>3</experiments>
</comment>
<comment type="tissue specificity">
    <text evidence="2">Expressed in roots, leaves, stems and flowers.</text>
</comment>
<comment type="miscellaneous">
    <text>Like all plant Pin1-type PPIases, do not contain the N-terminal WW domain found in other eukaryotic parvulins, but contains a four-amino acid insertion next to the phospho-specific recognition site of the active site. These extra amino acids may be important for mediating the substrate interaction of plant enzymes.</text>
</comment>
<comment type="similarity">
    <text evidence="3">Belongs to the PpiC/parvulin rotamase family.</text>
</comment>
<protein>
    <recommendedName>
        <fullName>Peptidyl-prolyl cis-trans isomerase Pin1</fullName>
        <shortName>PPIase Pin1</shortName>
        <ecNumber>5.2.1.8</ecNumber>
    </recommendedName>
    <alternativeName>
        <fullName>PIN1At</fullName>
    </alternativeName>
    <alternativeName>
        <fullName>Rotamase Pin1</fullName>
    </alternativeName>
</protein>
<name>PIN1_ARATH</name>